<reference key="1">
    <citation type="submission" date="2006-08" db="EMBL/GenBank/DDBJ databases">
        <title>Complete sequence of chromosome 1 of Burkholderia cepacia AMMD.</title>
        <authorList>
            <person name="Copeland A."/>
            <person name="Lucas S."/>
            <person name="Lapidus A."/>
            <person name="Barry K."/>
            <person name="Detter J.C."/>
            <person name="Glavina del Rio T."/>
            <person name="Hammon N."/>
            <person name="Israni S."/>
            <person name="Pitluck S."/>
            <person name="Bruce D."/>
            <person name="Chain P."/>
            <person name="Malfatti S."/>
            <person name="Shin M."/>
            <person name="Vergez L."/>
            <person name="Schmutz J."/>
            <person name="Larimer F."/>
            <person name="Land M."/>
            <person name="Hauser L."/>
            <person name="Kyrpides N."/>
            <person name="Kim E."/>
            <person name="Parke J."/>
            <person name="Coenye T."/>
            <person name="Konstantinidis K."/>
            <person name="Ramette A."/>
            <person name="Tiedje J."/>
            <person name="Richardson P."/>
        </authorList>
    </citation>
    <scope>NUCLEOTIDE SEQUENCE [LARGE SCALE GENOMIC DNA]</scope>
    <source>
        <strain>ATCC BAA-244 / DSM 16087 / CCUG 44356 / LMG 19182 / AMMD</strain>
    </source>
</reference>
<name>UVRC_BURCM</name>
<comment type="function">
    <text evidence="1">The UvrABC repair system catalyzes the recognition and processing of DNA lesions. UvrC both incises the 5' and 3' sides of the lesion. The N-terminal half is responsible for the 3' incision and the C-terminal half is responsible for the 5' incision.</text>
</comment>
<comment type="subunit">
    <text evidence="1">Interacts with UvrB in an incision complex.</text>
</comment>
<comment type="subcellular location">
    <subcellularLocation>
        <location evidence="1">Cytoplasm</location>
    </subcellularLocation>
</comment>
<comment type="similarity">
    <text evidence="1">Belongs to the UvrC family.</text>
</comment>
<gene>
    <name evidence="1" type="primary">uvrC</name>
    <name type="ordered locus">Bamb_1019</name>
</gene>
<organism>
    <name type="scientific">Burkholderia ambifaria (strain ATCC BAA-244 / DSM 16087 / CCUG 44356 / LMG 19182 / AMMD)</name>
    <name type="common">Burkholderia cepacia (strain AMMD)</name>
    <dbReference type="NCBI Taxonomy" id="339670"/>
    <lineage>
        <taxon>Bacteria</taxon>
        <taxon>Pseudomonadati</taxon>
        <taxon>Pseudomonadota</taxon>
        <taxon>Betaproteobacteria</taxon>
        <taxon>Burkholderiales</taxon>
        <taxon>Burkholderiaceae</taxon>
        <taxon>Burkholderia</taxon>
        <taxon>Burkholderia cepacia complex</taxon>
    </lineage>
</organism>
<proteinExistence type="inferred from homology"/>
<evidence type="ECO:0000255" key="1">
    <source>
        <dbReference type="HAMAP-Rule" id="MF_00203"/>
    </source>
</evidence>
<keyword id="KW-0963">Cytoplasm</keyword>
<keyword id="KW-0227">DNA damage</keyword>
<keyword id="KW-0228">DNA excision</keyword>
<keyword id="KW-0234">DNA repair</keyword>
<keyword id="KW-0267">Excision nuclease</keyword>
<keyword id="KW-0742">SOS response</keyword>
<accession>Q0BGZ5</accession>
<protein>
    <recommendedName>
        <fullName evidence="1">UvrABC system protein C</fullName>
        <shortName evidence="1">Protein UvrC</shortName>
    </recommendedName>
    <alternativeName>
        <fullName evidence="1">Excinuclease ABC subunit C</fullName>
    </alternativeName>
</protein>
<dbReference type="EMBL" id="CP000440">
    <property type="protein sequence ID" value="ABI86578.1"/>
    <property type="molecule type" value="Genomic_DNA"/>
</dbReference>
<dbReference type="RefSeq" id="WP_011656361.1">
    <property type="nucleotide sequence ID" value="NC_008390.1"/>
</dbReference>
<dbReference type="SMR" id="Q0BGZ5"/>
<dbReference type="GeneID" id="93083574"/>
<dbReference type="KEGG" id="bam:Bamb_1019"/>
<dbReference type="PATRIC" id="fig|339670.21.peg.553"/>
<dbReference type="eggNOG" id="COG0322">
    <property type="taxonomic scope" value="Bacteria"/>
</dbReference>
<dbReference type="Proteomes" id="UP000000662">
    <property type="component" value="Chromosome 1"/>
</dbReference>
<dbReference type="GO" id="GO:0005737">
    <property type="term" value="C:cytoplasm"/>
    <property type="evidence" value="ECO:0007669"/>
    <property type="project" value="UniProtKB-SubCell"/>
</dbReference>
<dbReference type="GO" id="GO:0009380">
    <property type="term" value="C:excinuclease repair complex"/>
    <property type="evidence" value="ECO:0007669"/>
    <property type="project" value="InterPro"/>
</dbReference>
<dbReference type="GO" id="GO:0003677">
    <property type="term" value="F:DNA binding"/>
    <property type="evidence" value="ECO:0007669"/>
    <property type="project" value="UniProtKB-UniRule"/>
</dbReference>
<dbReference type="GO" id="GO:0009381">
    <property type="term" value="F:excinuclease ABC activity"/>
    <property type="evidence" value="ECO:0007669"/>
    <property type="project" value="UniProtKB-UniRule"/>
</dbReference>
<dbReference type="GO" id="GO:0006289">
    <property type="term" value="P:nucleotide-excision repair"/>
    <property type="evidence" value="ECO:0007669"/>
    <property type="project" value="UniProtKB-UniRule"/>
</dbReference>
<dbReference type="GO" id="GO:0009432">
    <property type="term" value="P:SOS response"/>
    <property type="evidence" value="ECO:0007669"/>
    <property type="project" value="UniProtKB-UniRule"/>
</dbReference>
<dbReference type="CDD" id="cd10434">
    <property type="entry name" value="GIY-YIG_UvrC_Cho"/>
    <property type="match status" value="1"/>
</dbReference>
<dbReference type="FunFam" id="3.30.420.340:FF:000001">
    <property type="entry name" value="UvrABC system protein C"/>
    <property type="match status" value="1"/>
</dbReference>
<dbReference type="FunFam" id="3.40.1440.10:FF:000001">
    <property type="entry name" value="UvrABC system protein C"/>
    <property type="match status" value="1"/>
</dbReference>
<dbReference type="Gene3D" id="1.10.150.20">
    <property type="entry name" value="5' to 3' exonuclease, C-terminal subdomain"/>
    <property type="match status" value="1"/>
</dbReference>
<dbReference type="Gene3D" id="3.40.1440.10">
    <property type="entry name" value="GIY-YIG endonuclease"/>
    <property type="match status" value="1"/>
</dbReference>
<dbReference type="Gene3D" id="4.10.860.10">
    <property type="entry name" value="UVR domain"/>
    <property type="match status" value="1"/>
</dbReference>
<dbReference type="Gene3D" id="3.30.420.340">
    <property type="entry name" value="UvrC, RNAse H endonuclease domain"/>
    <property type="match status" value="1"/>
</dbReference>
<dbReference type="HAMAP" id="MF_00203">
    <property type="entry name" value="UvrC"/>
    <property type="match status" value="1"/>
</dbReference>
<dbReference type="InterPro" id="IPR000305">
    <property type="entry name" value="GIY-YIG_endonuc"/>
</dbReference>
<dbReference type="InterPro" id="IPR035901">
    <property type="entry name" value="GIY-YIG_endonuc_sf"/>
</dbReference>
<dbReference type="InterPro" id="IPR047296">
    <property type="entry name" value="GIY-YIG_UvrC_Cho"/>
</dbReference>
<dbReference type="InterPro" id="IPR003583">
    <property type="entry name" value="Hlx-hairpin-Hlx_DNA-bd_motif"/>
</dbReference>
<dbReference type="InterPro" id="IPR010994">
    <property type="entry name" value="RuvA_2-like"/>
</dbReference>
<dbReference type="InterPro" id="IPR001943">
    <property type="entry name" value="UVR_dom"/>
</dbReference>
<dbReference type="InterPro" id="IPR036876">
    <property type="entry name" value="UVR_dom_sf"/>
</dbReference>
<dbReference type="InterPro" id="IPR050066">
    <property type="entry name" value="UvrABC_protein_C"/>
</dbReference>
<dbReference type="InterPro" id="IPR004791">
    <property type="entry name" value="UvrC"/>
</dbReference>
<dbReference type="InterPro" id="IPR001162">
    <property type="entry name" value="UvrC_RNase_H_dom"/>
</dbReference>
<dbReference type="InterPro" id="IPR038476">
    <property type="entry name" value="UvrC_RNase_H_dom_sf"/>
</dbReference>
<dbReference type="NCBIfam" id="NF001824">
    <property type="entry name" value="PRK00558.1-5"/>
    <property type="match status" value="1"/>
</dbReference>
<dbReference type="NCBIfam" id="TIGR00194">
    <property type="entry name" value="uvrC"/>
    <property type="match status" value="1"/>
</dbReference>
<dbReference type="PANTHER" id="PTHR30562:SF1">
    <property type="entry name" value="UVRABC SYSTEM PROTEIN C"/>
    <property type="match status" value="1"/>
</dbReference>
<dbReference type="PANTHER" id="PTHR30562">
    <property type="entry name" value="UVRC/OXIDOREDUCTASE"/>
    <property type="match status" value="1"/>
</dbReference>
<dbReference type="Pfam" id="PF01541">
    <property type="entry name" value="GIY-YIG"/>
    <property type="match status" value="1"/>
</dbReference>
<dbReference type="Pfam" id="PF14520">
    <property type="entry name" value="HHH_5"/>
    <property type="match status" value="1"/>
</dbReference>
<dbReference type="Pfam" id="PF02151">
    <property type="entry name" value="UVR"/>
    <property type="match status" value="1"/>
</dbReference>
<dbReference type="Pfam" id="PF22920">
    <property type="entry name" value="UvrC_RNaseH"/>
    <property type="match status" value="2"/>
</dbReference>
<dbReference type="Pfam" id="PF08459">
    <property type="entry name" value="UvrC_RNaseH_dom"/>
    <property type="match status" value="1"/>
</dbReference>
<dbReference type="SMART" id="SM00465">
    <property type="entry name" value="GIYc"/>
    <property type="match status" value="1"/>
</dbReference>
<dbReference type="SMART" id="SM00278">
    <property type="entry name" value="HhH1"/>
    <property type="match status" value="2"/>
</dbReference>
<dbReference type="SUPFAM" id="SSF46600">
    <property type="entry name" value="C-terminal UvrC-binding domain of UvrB"/>
    <property type="match status" value="1"/>
</dbReference>
<dbReference type="SUPFAM" id="SSF82771">
    <property type="entry name" value="GIY-YIG endonuclease"/>
    <property type="match status" value="1"/>
</dbReference>
<dbReference type="SUPFAM" id="SSF47781">
    <property type="entry name" value="RuvA domain 2-like"/>
    <property type="match status" value="1"/>
</dbReference>
<dbReference type="PROSITE" id="PS50164">
    <property type="entry name" value="GIY_YIG"/>
    <property type="match status" value="1"/>
</dbReference>
<dbReference type="PROSITE" id="PS50151">
    <property type="entry name" value="UVR"/>
    <property type="match status" value="1"/>
</dbReference>
<dbReference type="PROSITE" id="PS50165">
    <property type="entry name" value="UVRC"/>
    <property type="match status" value="1"/>
</dbReference>
<feature type="chain" id="PRO_1000077758" description="UvrABC system protein C">
    <location>
        <begin position="1"/>
        <end position="684"/>
    </location>
</feature>
<feature type="domain" description="GIY-YIG" evidence="1">
    <location>
        <begin position="22"/>
        <end position="100"/>
    </location>
</feature>
<feature type="domain" description="UVR" evidence="1">
    <location>
        <begin position="209"/>
        <end position="244"/>
    </location>
</feature>
<sequence length="684" mass="74548">MTSPEAVDIPFEPKKILAQLPHMPGVYRYYDTAGAVLYVGKARDLKKRVSSYFTKTQLSPRIAMMVTRIARIETTVTRSEAEALLLENNLIKALAPRYNILFRDDKSYPYLKLTAHRFPRMAYYRGSVDKQNQYFGPFPSAWAVRESIQILQRVFQLRTCEDSVFNNRTRPCLLHQIGRCTAPCVGAISADDYAIDVSNAARFLLGRQSEVMKELEQKMHAFAAELKFEQAAAVRNQMSSLATVLHQQAIEVGSDSDVDILAVVAQGGRVCVNLAMVRGGRHLGDKAYFPAHVESALTLAEGGLGDEADGADGADEAAAALPGEPADEAAAARDAASSASGASSASVEAEVLDAFIAQHYLGNRVPPVLVVSHAPASRDLLELLSEQAGHKVSLVRQPQGQRRAWLSMAEQNARLALARLLSEQGSQQARTRALAETLSFECDDLAMLRIECFDISHTMGEATQASCVVYHHHKMQSGEYRRYNITGITPGDDYAAMRQVLTRRYEKMVEQAAQAAAADAAAGIDGESTREAEASSLLPNIVLIDGGKGQVEIARQVFTELGLDTSMLVGVAKGEGRKVGLETLVFADGRTPLELGKESAALMLVAQIRDEAHRFAITGMRAKRAKARQTSRLEELEGIGAKRRQRLLARFGGLRGVVAASVEELASVEGISHALAEQIYKQLH</sequence>